<evidence type="ECO:0000255" key="1">
    <source>
        <dbReference type="PROSITE-ProRule" id="PRU00274"/>
    </source>
</evidence>
<evidence type="ECO:0000269" key="2">
    <source>
    </source>
</evidence>
<evidence type="ECO:0000305" key="3"/>
<evidence type="ECO:0007829" key="4">
    <source>
        <dbReference type="PDB" id="1SGF"/>
    </source>
</evidence>
<accession>P00756</accession>
<accession>A2RTW1</accession>
<keyword id="KW-0002">3D-structure</keyword>
<keyword id="KW-0903">Direct protein sequencing</keyword>
<keyword id="KW-1015">Disulfide bond</keyword>
<keyword id="KW-0325">Glycoprotein</keyword>
<keyword id="KW-0339">Growth factor</keyword>
<keyword id="KW-0378">Hydrolase</keyword>
<keyword id="KW-0479">Metal-binding</keyword>
<keyword id="KW-0645">Protease</keyword>
<keyword id="KW-1185">Reference proteome</keyword>
<keyword id="KW-0720">Serine protease</keyword>
<keyword id="KW-0732">Signal</keyword>
<keyword id="KW-0862">Zinc</keyword>
<keyword id="KW-0865">Zymogen</keyword>
<dbReference type="EC" id="3.4.21.35"/>
<dbReference type="EMBL" id="X01389">
    <property type="protein sequence ID" value="CAA25645.1"/>
    <property type="molecule type" value="mRNA"/>
</dbReference>
<dbReference type="EMBL" id="X01798">
    <property type="protein sequence ID" value="CAA25928.1"/>
    <property type="molecule type" value="Genomic_DNA"/>
</dbReference>
<dbReference type="EMBL" id="X01799">
    <property type="protein sequence ID" value="CAA25930.1"/>
    <property type="molecule type" value="Genomic_DNA"/>
</dbReference>
<dbReference type="EMBL" id="BC132657">
    <property type="protein sequence ID" value="AAI32658.1"/>
    <property type="molecule type" value="mRNA"/>
</dbReference>
<dbReference type="EMBL" id="BC132659">
    <property type="protein sequence ID" value="AAI32660.1"/>
    <property type="molecule type" value="mRNA"/>
</dbReference>
<dbReference type="CCDS" id="CCDS21199.1"/>
<dbReference type="PIR" id="A91005">
    <property type="entry name" value="NGMSG"/>
</dbReference>
<dbReference type="RefSeq" id="NP_032719.1">
    <property type="nucleotide sequence ID" value="NM_008693.2"/>
</dbReference>
<dbReference type="PDB" id="1SGF">
    <property type="method" value="X-ray"/>
    <property type="resolution" value="3.15 A"/>
    <property type="chains" value="G/Z=25-261"/>
</dbReference>
<dbReference type="PDBsum" id="1SGF"/>
<dbReference type="SMR" id="P00756"/>
<dbReference type="FunCoup" id="P00756">
    <property type="interactions" value="75"/>
</dbReference>
<dbReference type="STRING" id="10090.ENSMUSP00000082577"/>
<dbReference type="MEROPS" id="S01.170"/>
<dbReference type="TCDB" id="8.A.131.1.5">
    <property type="family name" value="the transmembrane protease serine 3 (tmprss3) family"/>
</dbReference>
<dbReference type="GlyCosmos" id="P00756">
    <property type="glycosylation" value="1 site, No reported glycans"/>
</dbReference>
<dbReference type="GlyGen" id="P00756">
    <property type="glycosylation" value="2 sites"/>
</dbReference>
<dbReference type="iPTMnet" id="P00756"/>
<dbReference type="PaxDb" id="10090-ENSMUSP00000082577"/>
<dbReference type="PeptideAtlas" id="P00756"/>
<dbReference type="ProteomicsDB" id="269166"/>
<dbReference type="DNASU" id="18050"/>
<dbReference type="Ensembl" id="ENSMUST00000085450.4">
    <property type="protein sequence ID" value="ENSMUSP00000082577.3"/>
    <property type="gene ID" value="ENSMUSG00000066515.4"/>
</dbReference>
<dbReference type="GeneID" id="18050"/>
<dbReference type="KEGG" id="mmu:18050"/>
<dbReference type="UCSC" id="uc009gol.2">
    <property type="organism name" value="mouse"/>
</dbReference>
<dbReference type="AGR" id="MGI:97322"/>
<dbReference type="CTD" id="18050"/>
<dbReference type="MGI" id="MGI:97322">
    <property type="gene designation" value="Klk1b3"/>
</dbReference>
<dbReference type="VEuPathDB" id="HostDB:ENSMUSG00000066515"/>
<dbReference type="eggNOG" id="KOG3627">
    <property type="taxonomic scope" value="Eukaryota"/>
</dbReference>
<dbReference type="GeneTree" id="ENSGT01020000230389"/>
<dbReference type="HOGENOM" id="CLU_006842_1_1_1"/>
<dbReference type="InParanoid" id="P00756"/>
<dbReference type="OMA" id="NFQPWLS"/>
<dbReference type="OrthoDB" id="10061449at2759"/>
<dbReference type="PhylomeDB" id="P00756"/>
<dbReference type="TreeFam" id="TF331065"/>
<dbReference type="BRENDA" id="3.4.21.77">
    <property type="organism ID" value="3474"/>
</dbReference>
<dbReference type="Reactome" id="R-MMU-1592389">
    <property type="pathway name" value="Activation of Matrix Metalloproteinases"/>
</dbReference>
<dbReference type="BioGRID-ORCS" id="18050">
    <property type="hits" value="4 hits in 79 CRISPR screens"/>
</dbReference>
<dbReference type="ChiTaRS" id="Klk1b3">
    <property type="organism name" value="mouse"/>
</dbReference>
<dbReference type="EvolutionaryTrace" id="P00756"/>
<dbReference type="PRO" id="PR:P00756"/>
<dbReference type="Proteomes" id="UP000000589">
    <property type="component" value="Chromosome 7"/>
</dbReference>
<dbReference type="RNAct" id="P00756">
    <property type="molecule type" value="protein"/>
</dbReference>
<dbReference type="Bgee" id="ENSMUSG00000066515">
    <property type="expression patterns" value="Expressed in epiblast cell in embryo and 25 other cell types or tissues"/>
</dbReference>
<dbReference type="ExpressionAtlas" id="P00756">
    <property type="expression patterns" value="baseline and differential"/>
</dbReference>
<dbReference type="GO" id="GO:0008083">
    <property type="term" value="F:growth factor activity"/>
    <property type="evidence" value="ECO:0007669"/>
    <property type="project" value="UniProtKB-KW"/>
</dbReference>
<dbReference type="GO" id="GO:0046872">
    <property type="term" value="F:metal ion binding"/>
    <property type="evidence" value="ECO:0007669"/>
    <property type="project" value="UniProtKB-KW"/>
</dbReference>
<dbReference type="GO" id="GO:0004252">
    <property type="term" value="F:serine-type endopeptidase activity"/>
    <property type="evidence" value="ECO:0007669"/>
    <property type="project" value="UniProtKB-EC"/>
</dbReference>
<dbReference type="GO" id="GO:0006508">
    <property type="term" value="P:proteolysis"/>
    <property type="evidence" value="ECO:0007669"/>
    <property type="project" value="UniProtKB-KW"/>
</dbReference>
<dbReference type="CDD" id="cd00190">
    <property type="entry name" value="Tryp_SPc"/>
    <property type="match status" value="1"/>
</dbReference>
<dbReference type="FunFam" id="2.40.10.10:FF:000032">
    <property type="entry name" value="Kallikrein 1-related peptidase C9"/>
    <property type="match status" value="1"/>
</dbReference>
<dbReference type="FunFam" id="2.40.10.10:FF:000042">
    <property type="entry name" value="Kallikrein 1-related peptidase C9"/>
    <property type="match status" value="1"/>
</dbReference>
<dbReference type="Gene3D" id="2.40.10.10">
    <property type="entry name" value="Trypsin-like serine proteases"/>
    <property type="match status" value="2"/>
</dbReference>
<dbReference type="InterPro" id="IPR009003">
    <property type="entry name" value="Peptidase_S1_PA"/>
</dbReference>
<dbReference type="InterPro" id="IPR043504">
    <property type="entry name" value="Peptidase_S1_PA_chymotrypsin"/>
</dbReference>
<dbReference type="InterPro" id="IPR001314">
    <property type="entry name" value="Peptidase_S1A"/>
</dbReference>
<dbReference type="InterPro" id="IPR001254">
    <property type="entry name" value="Trypsin_dom"/>
</dbReference>
<dbReference type="InterPro" id="IPR018114">
    <property type="entry name" value="TRYPSIN_HIS"/>
</dbReference>
<dbReference type="InterPro" id="IPR033116">
    <property type="entry name" value="TRYPSIN_SER"/>
</dbReference>
<dbReference type="PANTHER" id="PTHR24271:SF47">
    <property type="entry name" value="KALLIKREIN-1"/>
    <property type="match status" value="1"/>
</dbReference>
<dbReference type="PANTHER" id="PTHR24271">
    <property type="entry name" value="KALLIKREIN-RELATED"/>
    <property type="match status" value="1"/>
</dbReference>
<dbReference type="Pfam" id="PF00089">
    <property type="entry name" value="Trypsin"/>
    <property type="match status" value="1"/>
</dbReference>
<dbReference type="PRINTS" id="PR00722">
    <property type="entry name" value="CHYMOTRYPSIN"/>
</dbReference>
<dbReference type="SMART" id="SM00020">
    <property type="entry name" value="Tryp_SPc"/>
    <property type="match status" value="1"/>
</dbReference>
<dbReference type="SUPFAM" id="SSF50494">
    <property type="entry name" value="Trypsin-like serine proteases"/>
    <property type="match status" value="1"/>
</dbReference>
<dbReference type="PROSITE" id="PS50240">
    <property type="entry name" value="TRYPSIN_DOM"/>
    <property type="match status" value="1"/>
</dbReference>
<dbReference type="PROSITE" id="PS00134">
    <property type="entry name" value="TRYPSIN_HIS"/>
    <property type="match status" value="1"/>
</dbReference>
<dbReference type="PROSITE" id="PS00135">
    <property type="entry name" value="TRYPSIN_SER"/>
    <property type="match status" value="1"/>
</dbReference>
<organism>
    <name type="scientific">Mus musculus</name>
    <name type="common">Mouse</name>
    <dbReference type="NCBI Taxonomy" id="10090"/>
    <lineage>
        <taxon>Eukaryota</taxon>
        <taxon>Metazoa</taxon>
        <taxon>Chordata</taxon>
        <taxon>Craniata</taxon>
        <taxon>Vertebrata</taxon>
        <taxon>Euteleostomi</taxon>
        <taxon>Mammalia</taxon>
        <taxon>Eutheria</taxon>
        <taxon>Euarchontoglires</taxon>
        <taxon>Glires</taxon>
        <taxon>Rodentia</taxon>
        <taxon>Myomorpha</taxon>
        <taxon>Muroidea</taxon>
        <taxon>Muridae</taxon>
        <taxon>Murinae</taxon>
        <taxon>Mus</taxon>
        <taxon>Mus</taxon>
    </lineage>
</organism>
<gene>
    <name type="primary">Klk1b3</name>
    <name type="synonym">Klk-3</name>
    <name type="synonym">Klk3</name>
    <name type="synonym">Ngfg</name>
</gene>
<feature type="signal peptide" evidence="3">
    <location>
        <begin position="1"/>
        <end position="18"/>
    </location>
</feature>
<feature type="propeptide" id="PRO_0000027968" description="Activation peptide" evidence="2">
    <location>
        <begin position="19"/>
        <end position="24"/>
    </location>
</feature>
<feature type="chain" id="PRO_0000027969" description="Kallikrein 1-related peptidase b3">
    <location>
        <begin position="25"/>
        <end position="261"/>
    </location>
</feature>
<feature type="chain" id="PRO_0000027970" description="Nerve growth factor gamma chain 1">
    <location>
        <begin position="25"/>
        <end position="107"/>
    </location>
</feature>
<feature type="chain" id="PRO_0000027971" description="Nerve growth factor gamma chain 2">
    <location>
        <begin position="112"/>
        <end position="261"/>
    </location>
</feature>
<feature type="domain" description="Peptidase S1" evidence="1">
    <location>
        <begin position="25"/>
        <end position="258"/>
    </location>
</feature>
<feature type="region of interest" description="Segment B1">
    <location>
        <begin position="25"/>
        <end position="107"/>
    </location>
</feature>
<feature type="region of interest" description="Segment A">
    <location>
        <begin position="112"/>
        <end position="261"/>
    </location>
</feature>
<feature type="region of interest" description="Segment C">
    <location>
        <begin position="112"/>
        <end position="164"/>
    </location>
</feature>
<feature type="region of interest" description="Segment B2">
    <location>
        <begin position="165"/>
        <end position="261"/>
    </location>
</feature>
<feature type="active site" description="Charge relay system">
    <location>
        <position position="65"/>
    </location>
</feature>
<feature type="active site" description="Charge relay system">
    <location>
        <position position="120"/>
    </location>
</feature>
<feature type="active site" description="Charge relay system">
    <location>
        <position position="213"/>
    </location>
</feature>
<feature type="binding site">
    <location>
        <position position="231"/>
    </location>
    <ligand>
        <name>Zn(2+)</name>
        <dbReference type="ChEBI" id="CHEBI:29105"/>
    </ligand>
</feature>
<feature type="binding site">
    <location>
        <position position="236"/>
    </location>
    <ligand>
        <name>Zn(2+)</name>
        <dbReference type="ChEBI" id="CHEBI:29105"/>
    </ligand>
</feature>
<feature type="glycosylation site" description="N-linked (GlcNAc...) asparagine" evidence="2">
    <location>
        <position position="102"/>
    </location>
</feature>
<feature type="disulfide bond">
    <location>
        <begin position="31"/>
        <end position="173"/>
    </location>
</feature>
<feature type="disulfide bond">
    <location>
        <begin position="50"/>
        <end position="66"/>
    </location>
</feature>
<feature type="disulfide bond">
    <location>
        <begin position="152"/>
        <end position="219"/>
    </location>
</feature>
<feature type="disulfide bond">
    <location>
        <begin position="184"/>
        <end position="198"/>
    </location>
</feature>
<feature type="disulfide bond">
    <location>
        <begin position="209"/>
        <end position="234"/>
    </location>
</feature>
<feature type="sequence conflict" description="In Ref. 2." evidence="3" ref="2">
    <location>
        <begin position="108"/>
        <end position="111"/>
    </location>
</feature>
<feature type="helix" evidence="4">
    <location>
        <begin position="33"/>
        <end position="35"/>
    </location>
</feature>
<feature type="strand" evidence="4">
    <location>
        <begin position="39"/>
        <end position="44"/>
    </location>
</feature>
<feature type="strand" evidence="4">
    <location>
        <begin position="47"/>
        <end position="56"/>
    </location>
</feature>
<feature type="strand" evidence="4">
    <location>
        <begin position="59"/>
        <end position="62"/>
    </location>
</feature>
<feature type="helix" evidence="4">
    <location>
        <begin position="64"/>
        <end position="66"/>
    </location>
</feature>
<feature type="strand" evidence="4">
    <location>
        <begin position="72"/>
        <end position="76"/>
    </location>
</feature>
<feature type="strand" evidence="4">
    <location>
        <begin position="88"/>
        <end position="97"/>
    </location>
</feature>
<feature type="helix" evidence="4">
    <location>
        <begin position="103"/>
        <end position="105"/>
    </location>
</feature>
<feature type="strand" evidence="4">
    <location>
        <begin position="122"/>
        <end position="128"/>
    </location>
</feature>
<feature type="strand" evidence="4">
    <location>
        <begin position="133"/>
        <end position="135"/>
    </location>
</feature>
<feature type="strand" evidence="4">
    <location>
        <begin position="151"/>
        <end position="164"/>
    </location>
</feature>
<feature type="strand" evidence="4">
    <location>
        <begin position="172"/>
        <end position="179"/>
    </location>
</feature>
<feature type="helix" evidence="4">
    <location>
        <begin position="181"/>
        <end position="187"/>
    </location>
</feature>
<feature type="strand" evidence="4">
    <location>
        <begin position="196"/>
        <end position="200"/>
    </location>
</feature>
<feature type="strand" evidence="4">
    <location>
        <begin position="202"/>
        <end position="205"/>
    </location>
</feature>
<feature type="strand" evidence="4">
    <location>
        <begin position="216"/>
        <end position="219"/>
    </location>
</feature>
<feature type="strand" evidence="4">
    <location>
        <begin position="222"/>
        <end position="229"/>
    </location>
</feature>
<feature type="strand" evidence="4">
    <location>
        <begin position="241"/>
        <end position="245"/>
    </location>
</feature>
<feature type="helix" evidence="4">
    <location>
        <begin position="246"/>
        <end position="249"/>
    </location>
</feature>
<feature type="helix" evidence="4">
    <location>
        <begin position="250"/>
        <end position="258"/>
    </location>
</feature>
<protein>
    <recommendedName>
        <fullName>Kallikrein 1-related peptidase b3</fullName>
        <ecNumber>3.4.21.35</ecNumber>
    </recommendedName>
    <alternativeName>
        <fullName>7S nerve growth factor gamma chain</fullName>
    </alternativeName>
    <alternativeName>
        <fullName>Gamma-NGF</fullName>
    </alternativeName>
    <alternativeName>
        <fullName>Glandular kallikrein K3</fullName>
        <shortName>mGK-3</shortName>
    </alternativeName>
    <alternativeName>
        <fullName>Tissue kallikrein-3</fullName>
    </alternativeName>
    <component>
        <recommendedName>
            <fullName>Nerve growth factor gamma chain 1</fullName>
        </recommendedName>
    </component>
    <component>
        <recommendedName>
            <fullName>Nerve growth factor gamma chain 2</fullName>
        </recommendedName>
    </component>
</protein>
<reference key="1">
    <citation type="journal article" date="1984" name="DNA">
        <title>Isolation of a cDNA clone coding for the gamma-subunit of mouse nerve growth factor using a high-stringency selection procedure.</title>
        <authorList>
            <person name="Ullrich A."/>
            <person name="Gray A."/>
            <person name="Wood W.I."/>
            <person name="Hayflick J."/>
            <person name="Seeburg P.H."/>
        </authorList>
    </citation>
    <scope>NUCLEOTIDE SEQUENCE [MRNA]</scope>
</reference>
<reference key="2">
    <citation type="journal article" date="1985" name="EMBO J.">
        <title>Genes for the alpha and gamma subunits of mouse nerve growth factor are contiguous.</title>
        <authorList>
            <person name="Evans B.A."/>
            <person name="Richards R.I."/>
        </authorList>
    </citation>
    <scope>NUCLEOTIDE SEQUENCE [GENOMIC DNA]</scope>
</reference>
<reference key="3">
    <citation type="journal article" date="2004" name="Genome Res.">
        <title>The status, quality, and expansion of the NIH full-length cDNA project: the Mammalian Gene Collection (MGC).</title>
        <authorList>
            <consortium name="The MGC Project Team"/>
        </authorList>
    </citation>
    <scope>NUCLEOTIDE SEQUENCE [LARGE SCALE MRNA]</scope>
    <source>
        <tissue>Brain</tissue>
    </source>
</reference>
<reference key="4">
    <citation type="journal article" date="1981" name="J. Biol. Chem.">
        <title>The amino acid sequence of the gamma-subunit of mouse submaxillary gland 7 S nerve growth factor.</title>
        <authorList>
            <person name="Thomas K.A."/>
            <person name="Baglan N.C."/>
            <person name="Bradshaw R.A."/>
        </authorList>
    </citation>
    <scope>PROTEIN SEQUENCE OF 25-261</scope>
    <source>
        <tissue>Submandibular gland</tissue>
    </source>
</reference>
<reference key="5">
    <citation type="journal article" date="1997" name="Structure">
        <title>Structure of mouse 7S NGF: a complex of nerve growth factor with four binding proteins.</title>
        <authorList>
            <person name="Bax B."/>
            <person name="Blundell T.L."/>
            <person name="Murray-Rust J."/>
            <person name="McDonald N.Q."/>
        </authorList>
    </citation>
    <scope>X-RAY CRYSTALLOGRAPHY (3.15 ANGSTROMS) OF 7S COMPLEX</scope>
    <source>
        <strain>Swiss Webster</strain>
        <tissue>Submandibular gland</tissue>
    </source>
</reference>
<proteinExistence type="evidence at protein level"/>
<sequence length="261" mass="28998">MWFLILFLALSLGGIDAAPPVQSRIVGGFKCEKNSQPWHVAVYRYTQYLCGGVLLDPNWVLTAAHCYDDNYKVWLGKNNLFKDEPSAQHRFVSKAIPHPGFNMSLMRKHIRFLEYDYSNDLMLLRLSKPADITDTVKPITLPTEEPKLGSTCLASGWGSITPTKFQFTDDLYCVNLKLLPNEDCAKAHIEKVTDAMLCAGEMDGGKDTCKGDSGGPLICDGVLQGITSWGHTPCGEPDMPGVYTKLNKFTSWIKDTMAKNP</sequence>
<name>K1KB3_MOUSE</name>
<comment type="function">
    <text>7S NGF alpha chain stabilizes the 7S complex. The beta dimer promotes neurite growth. The gamma chain is an arginine-specific protease; it may also have plasminogen activator activity, as well as mitogenic activity for chick embryo fibroblasts.</text>
</comment>
<comment type="catalytic activity">
    <reaction>
        <text>Preferential cleavage of Arg-|-Xaa bonds in small molecule substrates. Highly selective action to release kallidin (lysyl-bradykinin) from kininogen involves hydrolysis of Met-|-Xaa or Leu-|-Xaa.</text>
        <dbReference type="EC" id="3.4.21.35"/>
    </reaction>
</comment>
<comment type="cofactor">
    <cofactor>
        <name>Zn(2+)</name>
        <dbReference type="ChEBI" id="CHEBI:29105"/>
    </cofactor>
    <text>Binds 2 Zn(2+) ions per 7S complex. The Zn(2+) ions are bound at the alpha-gamma interfaces.</text>
</comment>
<comment type="subunit">
    <text>7S nerve growth factor is composed of two alpha chains, a beta dimer composed of identical chains, and two gamma chains.</text>
</comment>
<comment type="miscellaneous">
    <text>This precursor is cleaved into segments to produce the active form of the gamma chain, which occurs naturally as combinations of either two or three segments held together by disulfide bonds: B1 and A, or B1, C and B2.</text>
</comment>
<comment type="similarity">
    <text evidence="1">Belongs to the peptidase S1 family. Kallikrein subfamily.</text>
</comment>